<keyword id="KW-0010">Activator</keyword>
<keyword id="KW-0067">ATP-binding</keyword>
<keyword id="KW-0418">Kinase</keyword>
<keyword id="KW-0547">Nucleotide-binding</keyword>
<keyword id="KW-0539">Nucleus</keyword>
<keyword id="KW-1185">Reference proteome</keyword>
<keyword id="KW-0678">Repressor</keyword>
<keyword id="KW-0723">Serine/threonine-protein kinase</keyword>
<keyword id="KW-0804">Transcription</keyword>
<keyword id="KW-0805">Transcription regulation</keyword>
<keyword id="KW-0808">Transferase</keyword>
<protein>
    <recommendedName>
        <fullName>Cyclin-dependent kinase 8</fullName>
        <ecNumber>2.7.11.22</ecNumber>
        <ecNumber>2.7.11.23</ecNumber>
    </recommendedName>
    <alternativeName>
        <fullName>Cell division protein kinase 8</fullName>
    </alternativeName>
    <alternativeName>
        <fullName>Mediator complex subunit cdk8</fullName>
    </alternativeName>
    <alternativeName>
        <fullName>Mediator of RNA polymerase II transcription subunit cdk8</fullName>
    </alternativeName>
</protein>
<comment type="function">
    <text evidence="2">Component of the Mediator complex, a coactivator involved in regulated gene transcription of nearly all RNA polymerase II-dependent genes. Mediator functions as a bridge to convey information from gene-specific regulatory proteins to the basal RNA polymerase II transcription machinery. Mediator is recruited to promoters by direct interactions with regulatory proteins and serves as a scaffold for the assembly of a functional pre-initiation complex with RNA polymerase II and the general transcription factors. Phosphorylates the CTD (C-terminal domain) of the large subunit of RNA polymerase II (RNAp II), which may inhibit the formation of a transcription initiation complex (By similarity).</text>
</comment>
<comment type="catalytic activity">
    <reaction>
        <text>L-seryl-[protein] + ATP = O-phospho-L-seryl-[protein] + ADP + H(+)</text>
        <dbReference type="Rhea" id="RHEA:17989"/>
        <dbReference type="Rhea" id="RHEA-COMP:9863"/>
        <dbReference type="Rhea" id="RHEA-COMP:11604"/>
        <dbReference type="ChEBI" id="CHEBI:15378"/>
        <dbReference type="ChEBI" id="CHEBI:29999"/>
        <dbReference type="ChEBI" id="CHEBI:30616"/>
        <dbReference type="ChEBI" id="CHEBI:83421"/>
        <dbReference type="ChEBI" id="CHEBI:456216"/>
        <dbReference type="EC" id="2.7.11.22"/>
    </reaction>
</comment>
<comment type="catalytic activity">
    <reaction>
        <text>L-threonyl-[protein] + ATP = O-phospho-L-threonyl-[protein] + ADP + H(+)</text>
        <dbReference type="Rhea" id="RHEA:46608"/>
        <dbReference type="Rhea" id="RHEA-COMP:11060"/>
        <dbReference type="Rhea" id="RHEA-COMP:11605"/>
        <dbReference type="ChEBI" id="CHEBI:15378"/>
        <dbReference type="ChEBI" id="CHEBI:30013"/>
        <dbReference type="ChEBI" id="CHEBI:30616"/>
        <dbReference type="ChEBI" id="CHEBI:61977"/>
        <dbReference type="ChEBI" id="CHEBI:456216"/>
        <dbReference type="EC" id="2.7.11.22"/>
    </reaction>
</comment>
<comment type="catalytic activity">
    <reaction>
        <text>[DNA-directed RNA polymerase] + ATP = phospho-[DNA-directed RNA polymerase] + ADP + H(+)</text>
        <dbReference type="Rhea" id="RHEA:10216"/>
        <dbReference type="Rhea" id="RHEA-COMP:11321"/>
        <dbReference type="Rhea" id="RHEA-COMP:11322"/>
        <dbReference type="ChEBI" id="CHEBI:15378"/>
        <dbReference type="ChEBI" id="CHEBI:30616"/>
        <dbReference type="ChEBI" id="CHEBI:43176"/>
        <dbReference type="ChEBI" id="CHEBI:68546"/>
        <dbReference type="ChEBI" id="CHEBI:456216"/>
        <dbReference type="EC" id="2.7.11.23"/>
    </reaction>
</comment>
<comment type="cofactor">
    <cofactor evidence="1">
        <name>Mg(2+)</name>
        <dbReference type="ChEBI" id="CHEBI:18420"/>
    </cofactor>
</comment>
<comment type="subunit">
    <text evidence="1">Component of the Mediator complex. Interacts with ccnc.</text>
</comment>
<comment type="subcellular location">
    <subcellularLocation>
        <location evidence="6">Nucleus</location>
    </subcellularLocation>
</comment>
<comment type="similarity">
    <text evidence="6">Belongs to the protein kinase superfamily. CMGC Ser/Thr protein kinase family. CDC2/CDKX subfamily.</text>
</comment>
<reference key="1">
    <citation type="submission" date="2003-12" db="EMBL/GenBank/DDBJ databases">
        <authorList>
            <consortium name="NIH - Xenopus Gene Collection (XGC) project"/>
        </authorList>
    </citation>
    <scope>NUCLEOTIDE SEQUENCE [LARGE SCALE MRNA]</scope>
    <source>
        <tissue>Embryo</tissue>
    </source>
</reference>
<gene>
    <name type="primary">cdk8</name>
</gene>
<proteinExistence type="evidence at transcript level"/>
<evidence type="ECO:0000250" key="1"/>
<evidence type="ECO:0000250" key="2">
    <source>
        <dbReference type="UniProtKB" id="P49336"/>
    </source>
</evidence>
<evidence type="ECO:0000255" key="3">
    <source>
        <dbReference type="PROSITE-ProRule" id="PRU00159"/>
    </source>
</evidence>
<evidence type="ECO:0000255" key="4">
    <source>
        <dbReference type="PROSITE-ProRule" id="PRU10027"/>
    </source>
</evidence>
<evidence type="ECO:0000256" key="5">
    <source>
        <dbReference type="SAM" id="MobiDB-lite"/>
    </source>
</evidence>
<evidence type="ECO:0000305" key="6"/>
<sequence>MDYDFKVKLTGERERVEDLFEYEGCKVGRGTYGHVYKAKRKDGRDDRDYALKQIEGTGISMSACREIALLRELKHPNVISLQKVFLSHADRKVWLLFDFAEHDLWHIIKFHRASKANKKPVQLPRGMVKSLLYQILDGIHYLHANWVLHRDLKPANILVMGEGPERGRVKIADMGFARLFNSPLKPLADLDPVVVTFWYRAPELLLGARHYTKAIDIWAIGCIFAELLTSEPIFHCRQEDIKTSNPYHHDQLDRIFNVMGFPADKDWEDIKKMPEHSTLIKDFRRNTYTNCSLIKYMEKHKVKPDSKTFHLLQKLLTMDPIKRISSEQAMQDPYFLEDPLPTSDVFAGCQIPYPKREFLTEEEPDDKGDKKNQQQQQGNNHTNGTGHPGNQDNSHAQGPPLKKVRVVPPTTTSGGLIMTSDYQRSNPHAAYQNPGPSTSQPQSSMGYSSTSQQPPQYSHQTHRY</sequence>
<feature type="chain" id="PRO_0000312928" description="Cyclin-dependent kinase 8">
    <location>
        <begin position="1"/>
        <end position="464"/>
    </location>
</feature>
<feature type="domain" description="Protein kinase" evidence="3">
    <location>
        <begin position="21"/>
        <end position="335"/>
    </location>
</feature>
<feature type="region of interest" description="Interaction with CCNC" evidence="1">
    <location>
        <begin position="1"/>
        <end position="15"/>
    </location>
</feature>
<feature type="region of interest" description="Disordered" evidence="5">
    <location>
        <begin position="361"/>
        <end position="464"/>
    </location>
</feature>
<feature type="compositionally biased region" description="Low complexity" evidence="5">
    <location>
        <begin position="373"/>
        <end position="391"/>
    </location>
</feature>
<feature type="compositionally biased region" description="Polar residues" evidence="5">
    <location>
        <begin position="409"/>
        <end position="426"/>
    </location>
</feature>
<feature type="compositionally biased region" description="Polar residues" evidence="5">
    <location>
        <begin position="434"/>
        <end position="446"/>
    </location>
</feature>
<feature type="compositionally biased region" description="Low complexity" evidence="5">
    <location>
        <begin position="447"/>
        <end position="464"/>
    </location>
</feature>
<feature type="active site" description="Proton acceptor" evidence="3 4">
    <location>
        <position position="151"/>
    </location>
</feature>
<feature type="binding site" evidence="3">
    <location>
        <begin position="27"/>
        <end position="35"/>
    </location>
    <ligand>
        <name>ATP</name>
        <dbReference type="ChEBI" id="CHEBI:30616"/>
    </ligand>
</feature>
<feature type="binding site" evidence="3">
    <location>
        <position position="52"/>
    </location>
    <ligand>
        <name>ATP</name>
        <dbReference type="ChEBI" id="CHEBI:30616"/>
    </ligand>
</feature>
<name>CDK8_XENTR</name>
<organism>
    <name type="scientific">Xenopus tropicalis</name>
    <name type="common">Western clawed frog</name>
    <name type="synonym">Silurana tropicalis</name>
    <dbReference type="NCBI Taxonomy" id="8364"/>
    <lineage>
        <taxon>Eukaryota</taxon>
        <taxon>Metazoa</taxon>
        <taxon>Chordata</taxon>
        <taxon>Craniata</taxon>
        <taxon>Vertebrata</taxon>
        <taxon>Euteleostomi</taxon>
        <taxon>Amphibia</taxon>
        <taxon>Batrachia</taxon>
        <taxon>Anura</taxon>
        <taxon>Pipoidea</taxon>
        <taxon>Pipidae</taxon>
        <taxon>Xenopodinae</taxon>
        <taxon>Xenopus</taxon>
        <taxon>Silurana</taxon>
    </lineage>
</organism>
<accession>Q6P3N6</accession>
<dbReference type="EC" id="2.7.11.22"/>
<dbReference type="EC" id="2.7.11.23"/>
<dbReference type="EMBL" id="BC063921">
    <property type="protein sequence ID" value="AAH63921.1"/>
    <property type="molecule type" value="mRNA"/>
</dbReference>
<dbReference type="RefSeq" id="NP_989246.1">
    <property type="nucleotide sequence ID" value="NM_203915.1"/>
</dbReference>
<dbReference type="SMR" id="Q6P3N6"/>
<dbReference type="FunCoup" id="Q6P3N6">
    <property type="interactions" value="3096"/>
</dbReference>
<dbReference type="STRING" id="8364.ENSXETP00000010413"/>
<dbReference type="PaxDb" id="8364-ENSXETP00000023365"/>
<dbReference type="DNASU" id="394856"/>
<dbReference type="GeneID" id="394856"/>
<dbReference type="KEGG" id="xtr:394856"/>
<dbReference type="AGR" id="Xenbase:XB-GENE-962267"/>
<dbReference type="CTD" id="1024"/>
<dbReference type="Xenbase" id="XB-GENE-962267">
    <property type="gene designation" value="cdk8"/>
</dbReference>
<dbReference type="eggNOG" id="KOG0666">
    <property type="taxonomic scope" value="Eukaryota"/>
</dbReference>
<dbReference type="InParanoid" id="Q6P3N6"/>
<dbReference type="OMA" id="YFKNGGP"/>
<dbReference type="OrthoDB" id="6284126at2759"/>
<dbReference type="Proteomes" id="UP000008143">
    <property type="component" value="Chromosome 2"/>
</dbReference>
<dbReference type="GO" id="GO:0005634">
    <property type="term" value="C:nucleus"/>
    <property type="evidence" value="ECO:0007669"/>
    <property type="project" value="UniProtKB-SubCell"/>
</dbReference>
<dbReference type="GO" id="GO:0005524">
    <property type="term" value="F:ATP binding"/>
    <property type="evidence" value="ECO:0007669"/>
    <property type="project" value="UniProtKB-KW"/>
</dbReference>
<dbReference type="GO" id="GO:0004693">
    <property type="term" value="F:cyclin-dependent protein serine/threonine kinase activity"/>
    <property type="evidence" value="ECO:0007669"/>
    <property type="project" value="UniProtKB-EC"/>
</dbReference>
<dbReference type="GO" id="GO:0004672">
    <property type="term" value="F:protein kinase activity"/>
    <property type="evidence" value="ECO:0000250"/>
    <property type="project" value="UniProtKB"/>
</dbReference>
<dbReference type="GO" id="GO:0106310">
    <property type="term" value="F:protein serine kinase activity"/>
    <property type="evidence" value="ECO:0007669"/>
    <property type="project" value="RHEA"/>
</dbReference>
<dbReference type="GO" id="GO:0008353">
    <property type="term" value="F:RNA polymerase II CTD heptapeptide repeat kinase activity"/>
    <property type="evidence" value="ECO:0007669"/>
    <property type="project" value="UniProtKB-EC"/>
</dbReference>
<dbReference type="FunFam" id="1.10.510.10:FF:000088">
    <property type="entry name" value="cyclin-dependent kinase 8 isoform X1"/>
    <property type="match status" value="1"/>
</dbReference>
<dbReference type="FunFam" id="3.30.200.20:FF:000122">
    <property type="entry name" value="cyclin-dependent kinase 8 isoform X1"/>
    <property type="match status" value="1"/>
</dbReference>
<dbReference type="Gene3D" id="3.30.200.20">
    <property type="entry name" value="Phosphorylase Kinase, domain 1"/>
    <property type="match status" value="1"/>
</dbReference>
<dbReference type="Gene3D" id="1.10.510.10">
    <property type="entry name" value="Transferase(Phosphotransferase) domain 1"/>
    <property type="match status" value="1"/>
</dbReference>
<dbReference type="InterPro" id="IPR050108">
    <property type="entry name" value="CDK"/>
</dbReference>
<dbReference type="InterPro" id="IPR011009">
    <property type="entry name" value="Kinase-like_dom_sf"/>
</dbReference>
<dbReference type="InterPro" id="IPR000719">
    <property type="entry name" value="Prot_kinase_dom"/>
</dbReference>
<dbReference type="InterPro" id="IPR017441">
    <property type="entry name" value="Protein_kinase_ATP_BS"/>
</dbReference>
<dbReference type="InterPro" id="IPR008271">
    <property type="entry name" value="Ser/Thr_kinase_AS"/>
</dbReference>
<dbReference type="PANTHER" id="PTHR24056">
    <property type="entry name" value="CELL DIVISION PROTEIN KINASE"/>
    <property type="match status" value="1"/>
</dbReference>
<dbReference type="PANTHER" id="PTHR24056:SF243">
    <property type="entry name" value="CYCLIN-DEPENDENT KINASE 8"/>
    <property type="match status" value="1"/>
</dbReference>
<dbReference type="Pfam" id="PF00069">
    <property type="entry name" value="Pkinase"/>
    <property type="match status" value="1"/>
</dbReference>
<dbReference type="SMART" id="SM00220">
    <property type="entry name" value="S_TKc"/>
    <property type="match status" value="1"/>
</dbReference>
<dbReference type="SUPFAM" id="SSF56112">
    <property type="entry name" value="Protein kinase-like (PK-like)"/>
    <property type="match status" value="1"/>
</dbReference>
<dbReference type="PROSITE" id="PS00107">
    <property type="entry name" value="PROTEIN_KINASE_ATP"/>
    <property type="match status" value="1"/>
</dbReference>
<dbReference type="PROSITE" id="PS50011">
    <property type="entry name" value="PROTEIN_KINASE_DOM"/>
    <property type="match status" value="1"/>
</dbReference>
<dbReference type="PROSITE" id="PS00108">
    <property type="entry name" value="PROTEIN_KINASE_ST"/>
    <property type="match status" value="1"/>
</dbReference>